<name>PUR4_VIBCH</name>
<comment type="function">
    <text evidence="1">Phosphoribosylformylglycinamidine synthase involved in the purines biosynthetic pathway. Catalyzes the ATP-dependent conversion of formylglycinamide ribonucleotide (FGAR) and glutamine to yield formylglycinamidine ribonucleotide (FGAM) and glutamate.</text>
</comment>
<comment type="catalytic activity">
    <reaction evidence="1">
        <text>N(2)-formyl-N(1)-(5-phospho-beta-D-ribosyl)glycinamide + L-glutamine + ATP + H2O = 2-formamido-N(1)-(5-O-phospho-beta-D-ribosyl)acetamidine + L-glutamate + ADP + phosphate + H(+)</text>
        <dbReference type="Rhea" id="RHEA:17129"/>
        <dbReference type="ChEBI" id="CHEBI:15377"/>
        <dbReference type="ChEBI" id="CHEBI:15378"/>
        <dbReference type="ChEBI" id="CHEBI:29985"/>
        <dbReference type="ChEBI" id="CHEBI:30616"/>
        <dbReference type="ChEBI" id="CHEBI:43474"/>
        <dbReference type="ChEBI" id="CHEBI:58359"/>
        <dbReference type="ChEBI" id="CHEBI:147286"/>
        <dbReference type="ChEBI" id="CHEBI:147287"/>
        <dbReference type="ChEBI" id="CHEBI:456216"/>
        <dbReference type="EC" id="6.3.5.3"/>
    </reaction>
</comment>
<comment type="pathway">
    <text evidence="1">Purine metabolism; IMP biosynthesis via de novo pathway; 5-amino-1-(5-phospho-D-ribosyl)imidazole from N(2)-formyl-N(1)-(5-phospho-D-ribosyl)glycinamide: step 1/2.</text>
</comment>
<comment type="subunit">
    <text evidence="1">Monomer.</text>
</comment>
<comment type="subcellular location">
    <subcellularLocation>
        <location evidence="1">Cytoplasm</location>
    </subcellularLocation>
</comment>
<comment type="similarity">
    <text evidence="1">In the N-terminal section; belongs to the FGAMS family.</text>
</comment>
<evidence type="ECO:0000255" key="1">
    <source>
        <dbReference type="HAMAP-Rule" id="MF_00419"/>
    </source>
</evidence>
<keyword id="KW-0067">ATP-binding</keyword>
<keyword id="KW-0963">Cytoplasm</keyword>
<keyword id="KW-0315">Glutamine amidotransferase</keyword>
<keyword id="KW-0436">Ligase</keyword>
<keyword id="KW-0460">Magnesium</keyword>
<keyword id="KW-0479">Metal-binding</keyword>
<keyword id="KW-0547">Nucleotide-binding</keyword>
<keyword id="KW-0658">Purine biosynthesis</keyword>
<keyword id="KW-1185">Reference proteome</keyword>
<accession>Q9KTN2</accession>
<organism>
    <name type="scientific">Vibrio cholerae serotype O1 (strain ATCC 39315 / El Tor Inaba N16961)</name>
    <dbReference type="NCBI Taxonomy" id="243277"/>
    <lineage>
        <taxon>Bacteria</taxon>
        <taxon>Pseudomonadati</taxon>
        <taxon>Pseudomonadota</taxon>
        <taxon>Gammaproteobacteria</taxon>
        <taxon>Vibrionales</taxon>
        <taxon>Vibrionaceae</taxon>
        <taxon>Vibrio</taxon>
    </lineage>
</organism>
<dbReference type="EC" id="6.3.5.3" evidence="1"/>
<dbReference type="EMBL" id="AE003852">
    <property type="protein sequence ID" value="AAF94031.1"/>
    <property type="molecule type" value="Genomic_DNA"/>
</dbReference>
<dbReference type="PIR" id="A82272">
    <property type="entry name" value="A82272"/>
</dbReference>
<dbReference type="RefSeq" id="NP_230516.1">
    <property type="nucleotide sequence ID" value="NC_002505.1"/>
</dbReference>
<dbReference type="RefSeq" id="WP_001221777.1">
    <property type="nucleotide sequence ID" value="NZ_LT906614.1"/>
</dbReference>
<dbReference type="SMR" id="Q9KTN2"/>
<dbReference type="STRING" id="243277.VC_0869"/>
<dbReference type="MEROPS" id="C56.972"/>
<dbReference type="DNASU" id="2614536"/>
<dbReference type="EnsemblBacteria" id="AAF94031">
    <property type="protein sequence ID" value="AAF94031"/>
    <property type="gene ID" value="VC_0869"/>
</dbReference>
<dbReference type="KEGG" id="vch:VC_0869"/>
<dbReference type="PATRIC" id="fig|243277.26.peg.829"/>
<dbReference type="eggNOG" id="COG0046">
    <property type="taxonomic scope" value="Bacteria"/>
</dbReference>
<dbReference type="eggNOG" id="COG0047">
    <property type="taxonomic scope" value="Bacteria"/>
</dbReference>
<dbReference type="HOGENOM" id="CLU_001031_0_2_6"/>
<dbReference type="UniPathway" id="UPA00074">
    <property type="reaction ID" value="UER00128"/>
</dbReference>
<dbReference type="Proteomes" id="UP000000584">
    <property type="component" value="Chromosome 1"/>
</dbReference>
<dbReference type="GO" id="GO:0005737">
    <property type="term" value="C:cytoplasm"/>
    <property type="evidence" value="ECO:0000318"/>
    <property type="project" value="GO_Central"/>
</dbReference>
<dbReference type="GO" id="GO:0005524">
    <property type="term" value="F:ATP binding"/>
    <property type="evidence" value="ECO:0007669"/>
    <property type="project" value="UniProtKB-UniRule"/>
</dbReference>
<dbReference type="GO" id="GO:0046872">
    <property type="term" value="F:metal ion binding"/>
    <property type="evidence" value="ECO:0007669"/>
    <property type="project" value="UniProtKB-KW"/>
</dbReference>
<dbReference type="GO" id="GO:0004642">
    <property type="term" value="F:phosphoribosylformylglycinamidine synthase activity"/>
    <property type="evidence" value="ECO:0000318"/>
    <property type="project" value="GO_Central"/>
</dbReference>
<dbReference type="GO" id="GO:0006189">
    <property type="term" value="P:'de novo' IMP biosynthetic process"/>
    <property type="evidence" value="ECO:0007669"/>
    <property type="project" value="UniProtKB-UniRule"/>
</dbReference>
<dbReference type="GO" id="GO:0006164">
    <property type="term" value="P:purine nucleotide biosynthetic process"/>
    <property type="evidence" value="ECO:0000318"/>
    <property type="project" value="GO_Central"/>
</dbReference>
<dbReference type="CDD" id="cd01740">
    <property type="entry name" value="GATase1_FGAR_AT"/>
    <property type="match status" value="1"/>
</dbReference>
<dbReference type="CDD" id="cd02203">
    <property type="entry name" value="PurL_repeat1"/>
    <property type="match status" value="1"/>
</dbReference>
<dbReference type="FunFam" id="1.10.8.750:FF:000002">
    <property type="entry name" value="Phosphoribosylformylglycinamidine synthase"/>
    <property type="match status" value="1"/>
</dbReference>
<dbReference type="FunFam" id="3.30.1330.10:FF:000002">
    <property type="entry name" value="Phosphoribosylformylglycinamidine synthase"/>
    <property type="match status" value="1"/>
</dbReference>
<dbReference type="FunFam" id="3.30.1330.10:FF:000005">
    <property type="entry name" value="Phosphoribosylformylglycinamidine synthase"/>
    <property type="match status" value="1"/>
</dbReference>
<dbReference type="FunFam" id="3.40.50.880:FF:000008">
    <property type="entry name" value="Phosphoribosylformylglycinamidine synthase"/>
    <property type="match status" value="1"/>
</dbReference>
<dbReference type="FunFam" id="3.90.650.10:FF:000002">
    <property type="entry name" value="Phosphoribosylformylglycinamidine synthase"/>
    <property type="match status" value="1"/>
</dbReference>
<dbReference type="FunFam" id="3.90.650.10:FF:000005">
    <property type="entry name" value="Phosphoribosylformylglycinamidine synthase"/>
    <property type="match status" value="1"/>
</dbReference>
<dbReference type="Gene3D" id="3.40.50.880">
    <property type="match status" value="1"/>
</dbReference>
<dbReference type="Gene3D" id="1.10.8.750">
    <property type="entry name" value="Phosphoribosylformylglycinamidine synthase, linker domain"/>
    <property type="match status" value="1"/>
</dbReference>
<dbReference type="Gene3D" id="3.90.650.10">
    <property type="entry name" value="PurM-like C-terminal domain"/>
    <property type="match status" value="2"/>
</dbReference>
<dbReference type="Gene3D" id="3.30.1330.10">
    <property type="entry name" value="PurM-like, N-terminal domain"/>
    <property type="match status" value="2"/>
</dbReference>
<dbReference type="HAMAP" id="MF_00419">
    <property type="entry name" value="PurL_1"/>
    <property type="match status" value="1"/>
</dbReference>
<dbReference type="InterPro" id="IPR029062">
    <property type="entry name" value="Class_I_gatase-like"/>
</dbReference>
<dbReference type="InterPro" id="IPR040707">
    <property type="entry name" value="FGAR-AT_N"/>
</dbReference>
<dbReference type="InterPro" id="IPR055181">
    <property type="entry name" value="FGAR-AT_PurM_N-like"/>
</dbReference>
<dbReference type="InterPro" id="IPR010073">
    <property type="entry name" value="PurL_large"/>
</dbReference>
<dbReference type="InterPro" id="IPR041609">
    <property type="entry name" value="PurL_linker"/>
</dbReference>
<dbReference type="InterPro" id="IPR010918">
    <property type="entry name" value="PurM-like_C_dom"/>
</dbReference>
<dbReference type="InterPro" id="IPR036676">
    <property type="entry name" value="PurM-like_C_sf"/>
</dbReference>
<dbReference type="InterPro" id="IPR036921">
    <property type="entry name" value="PurM-like_N_sf"/>
</dbReference>
<dbReference type="InterPro" id="IPR036604">
    <property type="entry name" value="PurS-like_sf"/>
</dbReference>
<dbReference type="NCBIfam" id="TIGR01735">
    <property type="entry name" value="FGAM_synt"/>
    <property type="match status" value="1"/>
</dbReference>
<dbReference type="NCBIfam" id="NF003672">
    <property type="entry name" value="PRK05297.1"/>
    <property type="match status" value="1"/>
</dbReference>
<dbReference type="PANTHER" id="PTHR10099">
    <property type="entry name" value="PHOSPHORIBOSYLFORMYLGLYCINAMIDINE SYNTHASE"/>
    <property type="match status" value="1"/>
</dbReference>
<dbReference type="PANTHER" id="PTHR10099:SF1">
    <property type="entry name" value="PHOSPHORIBOSYLFORMYLGLYCINAMIDINE SYNTHASE"/>
    <property type="match status" value="1"/>
</dbReference>
<dbReference type="Pfam" id="PF02769">
    <property type="entry name" value="AIRS_C"/>
    <property type="match status" value="2"/>
</dbReference>
<dbReference type="Pfam" id="PF18072">
    <property type="entry name" value="FGAR-AT_linker"/>
    <property type="match status" value="1"/>
</dbReference>
<dbReference type="Pfam" id="PF18076">
    <property type="entry name" value="FGAR-AT_N"/>
    <property type="match status" value="1"/>
</dbReference>
<dbReference type="Pfam" id="PF22689">
    <property type="entry name" value="FGAR-AT_PurM_N-like"/>
    <property type="match status" value="1"/>
</dbReference>
<dbReference type="Pfam" id="PF13507">
    <property type="entry name" value="GATase_5"/>
    <property type="match status" value="1"/>
</dbReference>
<dbReference type="SMART" id="SM01211">
    <property type="entry name" value="GATase_5"/>
    <property type="match status" value="1"/>
</dbReference>
<dbReference type="SUPFAM" id="SSF52317">
    <property type="entry name" value="Class I glutamine amidotransferase-like"/>
    <property type="match status" value="1"/>
</dbReference>
<dbReference type="SUPFAM" id="SSF109736">
    <property type="entry name" value="FGAM synthase PurL, linker domain"/>
    <property type="match status" value="1"/>
</dbReference>
<dbReference type="SUPFAM" id="SSF56042">
    <property type="entry name" value="PurM C-terminal domain-like"/>
    <property type="match status" value="2"/>
</dbReference>
<dbReference type="SUPFAM" id="SSF55326">
    <property type="entry name" value="PurM N-terminal domain-like"/>
    <property type="match status" value="2"/>
</dbReference>
<dbReference type="SUPFAM" id="SSF82697">
    <property type="entry name" value="PurS-like"/>
    <property type="match status" value="1"/>
</dbReference>
<dbReference type="PROSITE" id="PS51273">
    <property type="entry name" value="GATASE_TYPE_1"/>
    <property type="match status" value="1"/>
</dbReference>
<reference key="1">
    <citation type="journal article" date="2000" name="Nature">
        <title>DNA sequence of both chromosomes of the cholera pathogen Vibrio cholerae.</title>
        <authorList>
            <person name="Heidelberg J.F."/>
            <person name="Eisen J.A."/>
            <person name="Nelson W.C."/>
            <person name="Clayton R.A."/>
            <person name="Gwinn M.L."/>
            <person name="Dodson R.J."/>
            <person name="Haft D.H."/>
            <person name="Hickey E.K."/>
            <person name="Peterson J.D."/>
            <person name="Umayam L.A."/>
            <person name="Gill S.R."/>
            <person name="Nelson K.E."/>
            <person name="Read T.D."/>
            <person name="Tettelin H."/>
            <person name="Richardson D.L."/>
            <person name="Ermolaeva M.D."/>
            <person name="Vamathevan J.J."/>
            <person name="Bass S."/>
            <person name="Qin H."/>
            <person name="Dragoi I."/>
            <person name="Sellers P."/>
            <person name="McDonald L.A."/>
            <person name="Utterback T.R."/>
            <person name="Fleischmann R.D."/>
            <person name="Nierman W.C."/>
            <person name="White O."/>
            <person name="Salzberg S.L."/>
            <person name="Smith H.O."/>
            <person name="Colwell R.R."/>
            <person name="Mekalanos J.J."/>
            <person name="Venter J.C."/>
            <person name="Fraser C.M."/>
        </authorList>
    </citation>
    <scope>NUCLEOTIDE SEQUENCE [LARGE SCALE GENOMIC DNA]</scope>
    <source>
        <strain>ATCC 39315 / El Tor Inaba N16961</strain>
    </source>
</reference>
<sequence length="1297" mass="141421">MRILRGSPALSEFRVNKLLTACREQQLPVTGIYAEFMHFADLKAELNPQELEKLEKLLTYGPTIQEHEPQGLLLLVTPRPGTISPWSSKATDIAHNCGLHGIKRLERGTAYYVEAETALTAAQIATLEALLHDRMMEVVFAELTDAQQLFSVAEPAPMSQVDVLAGGRRALEEANVSLGLALAEDEIDYLVESFTKLGRNPNDIELMMFAQANSEHCRHKIFNADWTIDGVKQDKSLFKMIKNTFEQTPDYVLSAYKDNAAVMTGSTVGRFFPDPESRQYTYHHEDAHILMKVETHNHPTAISPWPGASTGSGGEIRDEGATGIGGKPKAGLVGFTTSNLRIPGFEQPWESDFGKPSRIVNALDIMLEGPLGGAAFNNEFGRPNLLGYFRTYEEKVTSHAGEEVRGYHKPIMIAGGMGNIRAEHIQKKEIPVGAKLIVLGGPAMNIGLGGGAASSMASGQSAEDLDFASVQRENPEMERRCQEVIDRCWQLGDKNPIAFIHDVGAGGISNALPELVNDGDRGGKFQLRNVPNDEPGMSPLEIWCNESQERYVLAVAAEDMPLFDAICQRERAPYAVVGEATEERHLTLEDSHFANTPIDMPMDILLGKPPKMHREASTLKVSSPALERSGIELNEAVDRVLRLPAVAEKTFLITIGDRSVTGLVARDQMVGPWQVPVANCAVTAASFDSYHGEAMSMGERTPVALLDFGASARLAVGEAITNIAATDIGELKRIKLSANWMSPAGHPGEDAGLYEAVKAVGEELCPALGITIPVGKDSMSMKTKWQENGEQKEVTSPLSLIITAFARVEDIRKTVTPQLRTDLGETSLILIDLGNGQNRLGATALAQVYKQLGDKPADVDNAAQLKGFFDAVQTLVRNDKLVAYHDKGDGGLLVTLAEMAFAGHCGIKANIETLGDDALAALFNEELGAVVQVKNDELNAVLATLAAHGLEACAHVIGEVEASDRLLITCGEEVLIERSRTELRTIWAEMTHKMQALRDNSACADQEFAAKQDNRDPGLNAKLTYDVQADVAAPYIAKGVRPKMAILREQGVNSHVEMAAAFDRAGFDAVDVHMSDILTGQTVLDAYQGLVACGGFSYGDVLGAGEGWAKSILFNAQAREQFEQFFQRKDTFSLGVCNGCQMLSNLRDLIPGAELWPRFVRNESDRFEARFSLVEVQKSPSLFFSEMAGSRMPIAVSHGEGRVEVRDAQHLAAIEQSGTVAIRFVDNFGQPTQAYPSNPNGSPNAITGLTTQDGRVTIMMPHPERVFRTVANSWHPDNWGENGAWMRMFQNARKYFG</sequence>
<gene>
    <name evidence="1" type="primary">purL</name>
    <name type="ordered locus">VC_0869</name>
</gene>
<proteinExistence type="inferred from homology"/>
<protein>
    <recommendedName>
        <fullName evidence="1">Phosphoribosylformylglycinamidine synthase</fullName>
        <shortName evidence="1">FGAM synthase</shortName>
        <shortName evidence="1">FGAMS</shortName>
        <ecNumber evidence="1">6.3.5.3</ecNumber>
    </recommendedName>
    <alternativeName>
        <fullName evidence="1">Formylglycinamide ribonucleotide amidotransferase</fullName>
        <shortName evidence="1">FGAR amidotransferase</shortName>
        <shortName evidence="1">FGAR-AT</shortName>
    </alternativeName>
</protein>
<feature type="chain" id="PRO_0000100420" description="Phosphoribosylformylglycinamidine synthase">
    <location>
        <begin position="1"/>
        <end position="1297"/>
    </location>
</feature>
<feature type="domain" description="Glutamine amidotransferase type-1" evidence="1">
    <location>
        <begin position="1044"/>
        <end position="1297"/>
    </location>
</feature>
<feature type="active site" description="Nucleophile" evidence="1">
    <location>
        <position position="1137"/>
    </location>
</feature>
<feature type="active site" evidence="1">
    <location>
        <position position="1262"/>
    </location>
</feature>
<feature type="active site" evidence="1">
    <location>
        <position position="1264"/>
    </location>
</feature>
<feature type="binding site" evidence="1">
    <location>
        <begin position="307"/>
        <end position="318"/>
    </location>
    <ligand>
        <name>ATP</name>
        <dbReference type="ChEBI" id="CHEBI:30616"/>
    </ligand>
</feature>
<feature type="binding site" evidence="1">
    <location>
        <position position="678"/>
    </location>
    <ligand>
        <name>ATP</name>
        <dbReference type="ChEBI" id="CHEBI:30616"/>
    </ligand>
</feature>
<feature type="binding site" evidence="1">
    <location>
        <position position="718"/>
    </location>
    <ligand>
        <name>Mg(2+)</name>
        <dbReference type="ChEBI" id="CHEBI:18420"/>
    </ligand>
</feature>
<feature type="binding site" evidence="1">
    <location>
        <position position="722"/>
    </location>
    <ligand>
        <name>Mg(2+)</name>
        <dbReference type="ChEBI" id="CHEBI:18420"/>
    </ligand>
</feature>
<feature type="binding site" evidence="1">
    <location>
        <position position="886"/>
    </location>
    <ligand>
        <name>Mg(2+)</name>
        <dbReference type="ChEBI" id="CHEBI:18420"/>
    </ligand>
</feature>